<name>BBE26_ARATH</name>
<dbReference type="EC" id="1.1.1.-" evidence="1"/>
<dbReference type="EMBL" id="AB011475">
    <property type="protein sequence ID" value="BAB10125.1"/>
    <property type="molecule type" value="Genomic_DNA"/>
</dbReference>
<dbReference type="EMBL" id="AB017065">
    <property type="protein sequence ID" value="BAB10125.1"/>
    <property type="status" value="JOINED"/>
    <property type="molecule type" value="Genomic_DNA"/>
</dbReference>
<dbReference type="EMBL" id="CP002688">
    <property type="protein sequence ID" value="AED95105.1"/>
    <property type="molecule type" value="Genomic_DNA"/>
</dbReference>
<dbReference type="EMBL" id="AY072198">
    <property type="protein sequence ID" value="AAL60019.1"/>
    <property type="molecule type" value="mRNA"/>
</dbReference>
<dbReference type="RefSeq" id="NP_199253.1">
    <property type="nucleotide sequence ID" value="NM_123807.4"/>
</dbReference>
<dbReference type="SMR" id="Q9FKU8"/>
<dbReference type="FunCoup" id="Q9FKU8">
    <property type="interactions" value="14"/>
</dbReference>
<dbReference type="STRING" id="3702.Q9FKU8"/>
<dbReference type="GlyGen" id="Q9FKU8">
    <property type="glycosylation" value="3 sites"/>
</dbReference>
<dbReference type="iPTMnet" id="Q9FKU8"/>
<dbReference type="PaxDb" id="3702-AT5G44400.1"/>
<dbReference type="ProteomicsDB" id="240714"/>
<dbReference type="EnsemblPlants" id="AT5G44400.1">
    <property type="protein sequence ID" value="AT5G44400.1"/>
    <property type="gene ID" value="AT5G44400"/>
</dbReference>
<dbReference type="GeneID" id="834466"/>
<dbReference type="Gramene" id="AT5G44400.1">
    <property type="protein sequence ID" value="AT5G44400.1"/>
    <property type="gene ID" value="AT5G44400"/>
</dbReference>
<dbReference type="KEGG" id="ath:AT5G44400"/>
<dbReference type="Araport" id="AT5G44400"/>
<dbReference type="TAIR" id="AT5G44400">
    <property type="gene designation" value="ATBBE26"/>
</dbReference>
<dbReference type="eggNOG" id="ENOG502QQWK">
    <property type="taxonomic scope" value="Eukaryota"/>
</dbReference>
<dbReference type="HOGENOM" id="CLU_018354_6_0_1"/>
<dbReference type="InParanoid" id="Q9FKU8"/>
<dbReference type="OMA" id="MRQVNIN"/>
<dbReference type="OrthoDB" id="407275at2759"/>
<dbReference type="PhylomeDB" id="Q9FKU8"/>
<dbReference type="BioCyc" id="ARA:AT5G44400-MONOMER"/>
<dbReference type="CD-CODE" id="4299E36E">
    <property type="entry name" value="Nucleolus"/>
</dbReference>
<dbReference type="PRO" id="PR:Q9FKU8"/>
<dbReference type="Proteomes" id="UP000006548">
    <property type="component" value="Chromosome 5"/>
</dbReference>
<dbReference type="ExpressionAtlas" id="Q9FKU8">
    <property type="expression patterns" value="baseline and differential"/>
</dbReference>
<dbReference type="GO" id="GO:0005576">
    <property type="term" value="C:extracellular region"/>
    <property type="evidence" value="ECO:0007669"/>
    <property type="project" value="UniProtKB-KW"/>
</dbReference>
<dbReference type="GO" id="GO:0009506">
    <property type="term" value="C:plasmodesma"/>
    <property type="evidence" value="ECO:0007005"/>
    <property type="project" value="TAIR"/>
</dbReference>
<dbReference type="GO" id="GO:0071949">
    <property type="term" value="F:FAD binding"/>
    <property type="evidence" value="ECO:0007669"/>
    <property type="project" value="InterPro"/>
</dbReference>
<dbReference type="GO" id="GO:0016491">
    <property type="term" value="F:oxidoreductase activity"/>
    <property type="evidence" value="ECO:0007669"/>
    <property type="project" value="UniProtKB-KW"/>
</dbReference>
<dbReference type="FunFam" id="3.30.43.10:FF:000004">
    <property type="entry name" value="Berberine bridge enzyme-like 15"/>
    <property type="match status" value="1"/>
</dbReference>
<dbReference type="Gene3D" id="3.30.465.10">
    <property type="match status" value="1"/>
</dbReference>
<dbReference type="Gene3D" id="3.40.462.20">
    <property type="match status" value="1"/>
</dbReference>
<dbReference type="Gene3D" id="3.30.43.10">
    <property type="entry name" value="Uridine Diphospho-n-acetylenolpyruvylglucosamine Reductase, domain 2"/>
    <property type="match status" value="1"/>
</dbReference>
<dbReference type="InterPro" id="IPR012951">
    <property type="entry name" value="BBE"/>
</dbReference>
<dbReference type="InterPro" id="IPR016166">
    <property type="entry name" value="FAD-bd_PCMH"/>
</dbReference>
<dbReference type="InterPro" id="IPR036318">
    <property type="entry name" value="FAD-bd_PCMH-like_sf"/>
</dbReference>
<dbReference type="InterPro" id="IPR016167">
    <property type="entry name" value="FAD-bd_PCMH_sub1"/>
</dbReference>
<dbReference type="InterPro" id="IPR016169">
    <property type="entry name" value="FAD-bd_PCMH_sub2"/>
</dbReference>
<dbReference type="InterPro" id="IPR006094">
    <property type="entry name" value="Oxid_FAD_bind_N"/>
</dbReference>
<dbReference type="PANTHER" id="PTHR32448">
    <property type="entry name" value="OS08G0158400 PROTEIN"/>
    <property type="match status" value="1"/>
</dbReference>
<dbReference type="Pfam" id="PF08031">
    <property type="entry name" value="BBE"/>
    <property type="match status" value="1"/>
</dbReference>
<dbReference type="Pfam" id="PF01565">
    <property type="entry name" value="FAD_binding_4"/>
    <property type="match status" value="1"/>
</dbReference>
<dbReference type="SUPFAM" id="SSF56176">
    <property type="entry name" value="FAD-binding/transporter-associated domain-like"/>
    <property type="match status" value="1"/>
</dbReference>
<dbReference type="PROSITE" id="PS51387">
    <property type="entry name" value="FAD_PCMH"/>
    <property type="match status" value="1"/>
</dbReference>
<keyword id="KW-0134">Cell wall</keyword>
<keyword id="KW-1015">Disulfide bond</keyword>
<keyword id="KW-0274">FAD</keyword>
<keyword id="KW-0285">Flavoprotein</keyword>
<keyword id="KW-0325">Glycoprotein</keyword>
<keyword id="KW-0547">Nucleotide-binding</keyword>
<keyword id="KW-0560">Oxidoreductase</keyword>
<keyword id="KW-1185">Reference proteome</keyword>
<keyword id="KW-0964">Secreted</keyword>
<keyword id="KW-0732">Signal</keyword>
<sequence length="537" mass="60345">MGISKPLPLFSILVLYFSLYTITPTSSLASLQDQFINCVQRNTHVYFPLEKTFFAPTKNVSMFSQVLESTAQNLRFLKKSMPKPGFIFSPIHESHVQASIICSKKLRMHLRVRSGGHDYEGLSYVSQIDKPFILMDLSKMRQVNINIQDNSAWVQSGATVGELYYRIAEKSKVHGFPAGLCSSLGIGGHITGGAYGSMMRKYGLGADNVLDAKIVDANGKLLDRAAMGEDTFWAIRGGAGGSFGIILAWKIKLVPVPKTVTVFTVTKTLQQDVGNKIISKWQRVADKLVEELFIRVLFNVAGTGGNKTVTTSYNALFLGGKGTLMNVMKKSFPELGLTFKDCIEMSWLESIAYISGFPTHTPTNVLLQGKSPFPKVSFKAKSDFVKTPIPESGLQGIFKKLLKEDIPLMIWNPYGGMMAKIPESQIPFPHRKGVLFKVQYVTSWLDSDKRPSRHINWIRDLYSYMTPYVSSNPREAYVNYRDLDLGRNTKDVKTCIKQAQVWGANYFKNNFNRLMMIKAKVDPENFFRHEQSIPPMM</sequence>
<reference key="1">
    <citation type="journal article" date="1998" name="DNA Res.">
        <title>Structural analysis of Arabidopsis thaliana chromosome 5. V. Sequence features of the regions of 1,381,565 bp covered by twenty one physically assigned P1 and TAC clones.</title>
        <authorList>
            <person name="Kaneko T."/>
            <person name="Kotani H."/>
            <person name="Nakamura Y."/>
            <person name="Sato S."/>
            <person name="Asamizu E."/>
            <person name="Miyajima N."/>
            <person name="Tabata S."/>
        </authorList>
    </citation>
    <scope>NUCLEOTIDE SEQUENCE [LARGE SCALE GENOMIC DNA]</scope>
    <source>
        <strain>cv. Columbia</strain>
    </source>
</reference>
<reference key="2">
    <citation type="journal article" date="1999" name="DNA Res.">
        <title>Structural analysis of Arabidopsis thaliana chromosome 5. IX. Sequence features of the regions of 1,011,550 bp covered by seventeen P1 and TAC clones.</title>
        <authorList>
            <person name="Kaneko T."/>
            <person name="Katoh T."/>
            <person name="Sato S."/>
            <person name="Nakamura Y."/>
            <person name="Asamizu E."/>
            <person name="Kotani H."/>
            <person name="Miyajima N."/>
            <person name="Tabata S."/>
        </authorList>
    </citation>
    <scope>NUCLEOTIDE SEQUENCE [LARGE SCALE GENOMIC DNA]</scope>
    <source>
        <strain>cv. Columbia</strain>
    </source>
</reference>
<reference key="3">
    <citation type="journal article" date="2017" name="Plant J.">
        <title>Araport11: a complete reannotation of the Arabidopsis thaliana reference genome.</title>
        <authorList>
            <person name="Cheng C.Y."/>
            <person name="Krishnakumar V."/>
            <person name="Chan A.P."/>
            <person name="Thibaud-Nissen F."/>
            <person name="Schobel S."/>
            <person name="Town C.D."/>
        </authorList>
    </citation>
    <scope>GENOME REANNOTATION</scope>
    <source>
        <strain>cv. Columbia</strain>
    </source>
</reference>
<reference key="4">
    <citation type="journal article" date="2003" name="Science">
        <title>Empirical analysis of transcriptional activity in the Arabidopsis genome.</title>
        <authorList>
            <person name="Yamada K."/>
            <person name="Lim J."/>
            <person name="Dale J.M."/>
            <person name="Chen H."/>
            <person name="Shinn P."/>
            <person name="Palm C.J."/>
            <person name="Southwick A.M."/>
            <person name="Wu H.C."/>
            <person name="Kim C.J."/>
            <person name="Nguyen M."/>
            <person name="Pham P.K."/>
            <person name="Cheuk R.F."/>
            <person name="Karlin-Newmann G."/>
            <person name="Liu S.X."/>
            <person name="Lam B."/>
            <person name="Sakano H."/>
            <person name="Wu T."/>
            <person name="Yu G."/>
            <person name="Miranda M."/>
            <person name="Quach H.L."/>
            <person name="Tripp M."/>
            <person name="Chang C.H."/>
            <person name="Lee J.M."/>
            <person name="Toriumi M.J."/>
            <person name="Chan M.M."/>
            <person name="Tang C.C."/>
            <person name="Onodera C.S."/>
            <person name="Deng J.M."/>
            <person name="Akiyama K."/>
            <person name="Ansari Y."/>
            <person name="Arakawa T."/>
            <person name="Banh J."/>
            <person name="Banno F."/>
            <person name="Bowser L."/>
            <person name="Brooks S.Y."/>
            <person name="Carninci P."/>
            <person name="Chao Q."/>
            <person name="Choy N."/>
            <person name="Enju A."/>
            <person name="Goldsmith A.D."/>
            <person name="Gurjal M."/>
            <person name="Hansen N.F."/>
            <person name="Hayashizaki Y."/>
            <person name="Johnson-Hopson C."/>
            <person name="Hsuan V.W."/>
            <person name="Iida K."/>
            <person name="Karnes M."/>
            <person name="Khan S."/>
            <person name="Koesema E."/>
            <person name="Ishida J."/>
            <person name="Jiang P.X."/>
            <person name="Jones T."/>
            <person name="Kawai J."/>
            <person name="Kamiya A."/>
            <person name="Meyers C."/>
            <person name="Nakajima M."/>
            <person name="Narusaka M."/>
            <person name="Seki M."/>
            <person name="Sakurai T."/>
            <person name="Satou M."/>
            <person name="Tamse R."/>
            <person name="Vaysberg M."/>
            <person name="Wallender E.K."/>
            <person name="Wong C."/>
            <person name="Yamamura Y."/>
            <person name="Yuan S."/>
            <person name="Shinozaki K."/>
            <person name="Davis R.W."/>
            <person name="Theologis A."/>
            <person name="Ecker J.R."/>
        </authorList>
    </citation>
    <scope>NUCLEOTIDE SEQUENCE [LARGE SCALE MRNA]</scope>
    <source>
        <strain>cv. Columbia</strain>
    </source>
</reference>
<reference key="5">
    <citation type="journal article" date="2015" name="J. Biol. Chem.">
        <title>Oxidation of monolignols by members of the berberine bridge enzyme family suggests a role in plant cell wall metabolism.</title>
        <authorList>
            <person name="Daniel B."/>
            <person name="Pavkov-Keller T."/>
            <person name="Steiner B."/>
            <person name="Dordic A."/>
            <person name="Gutmann A."/>
            <person name="Nidetzky B."/>
            <person name="Sensen C.W."/>
            <person name="van der Graaff E."/>
            <person name="Wallner S."/>
            <person name="Gruber K."/>
            <person name="Macheroux P."/>
        </authorList>
    </citation>
    <scope>GENE FAMILY</scope>
    <scope>NOMENCLATURE</scope>
</reference>
<comment type="cofactor">
    <cofactor evidence="1">
        <name>FAD</name>
        <dbReference type="ChEBI" id="CHEBI:57692"/>
    </cofactor>
    <text evidence="1">Binds 1 FAD per subunit in a bicovalent manner.</text>
</comment>
<comment type="subcellular location">
    <subcellularLocation>
        <location evidence="1">Secreted</location>
        <location evidence="1">Cell wall</location>
    </subcellularLocation>
</comment>
<comment type="PTM">
    <text evidence="1">The FAD cofactor is bound via a bicovalent 6-S-cysteinyl, 8alpha-N1-histidyl FAD linkage.</text>
</comment>
<comment type="similarity">
    <text evidence="6">Belongs to the oxygen-dependent FAD-linked oxidoreductase family.</text>
</comment>
<organism>
    <name type="scientific">Arabidopsis thaliana</name>
    <name type="common">Mouse-ear cress</name>
    <dbReference type="NCBI Taxonomy" id="3702"/>
    <lineage>
        <taxon>Eukaryota</taxon>
        <taxon>Viridiplantae</taxon>
        <taxon>Streptophyta</taxon>
        <taxon>Embryophyta</taxon>
        <taxon>Tracheophyta</taxon>
        <taxon>Spermatophyta</taxon>
        <taxon>Magnoliopsida</taxon>
        <taxon>eudicotyledons</taxon>
        <taxon>Gunneridae</taxon>
        <taxon>Pentapetalae</taxon>
        <taxon>rosids</taxon>
        <taxon>malvids</taxon>
        <taxon>Brassicales</taxon>
        <taxon>Brassicaceae</taxon>
        <taxon>Camelineae</taxon>
        <taxon>Arabidopsis</taxon>
    </lineage>
</organism>
<protein>
    <recommendedName>
        <fullName evidence="5">Berberine bridge enzyme-like 26</fullName>
        <shortName evidence="5">AtBBE-like 26</shortName>
        <ecNumber evidence="1">1.1.1.-</ecNumber>
    </recommendedName>
</protein>
<evidence type="ECO:0000250" key="1">
    <source>
        <dbReference type="UniProtKB" id="O64743"/>
    </source>
</evidence>
<evidence type="ECO:0000255" key="2"/>
<evidence type="ECO:0000255" key="3">
    <source>
        <dbReference type="PROSITE-ProRule" id="PRU00498"/>
    </source>
</evidence>
<evidence type="ECO:0000255" key="4">
    <source>
        <dbReference type="PROSITE-ProRule" id="PRU00718"/>
    </source>
</evidence>
<evidence type="ECO:0000303" key="5">
    <source>
    </source>
</evidence>
<evidence type="ECO:0000305" key="6"/>
<evidence type="ECO:0000312" key="7">
    <source>
        <dbReference type="Araport" id="AT5G44400"/>
    </source>
</evidence>
<evidence type="ECO:0000312" key="8">
    <source>
        <dbReference type="EMBL" id="BAB10125.1"/>
    </source>
</evidence>
<feature type="signal peptide" evidence="2">
    <location>
        <begin position="1"/>
        <end position="27"/>
    </location>
</feature>
<feature type="chain" id="PRO_5008179961" description="Berberine bridge enzyme-like 26">
    <location>
        <begin position="28"/>
        <end position="537"/>
    </location>
</feature>
<feature type="domain" description="FAD-binding PCMH-type" evidence="4">
    <location>
        <begin position="80"/>
        <end position="256"/>
    </location>
</feature>
<feature type="glycosylation site" description="N-linked (GlcNAc...) asparagine" evidence="3">
    <location>
        <position position="59"/>
    </location>
</feature>
<feature type="glycosylation site" description="N-linked (GlcNAc...) asparagine" evidence="3">
    <location>
        <position position="306"/>
    </location>
</feature>
<feature type="disulfide bond" evidence="1">
    <location>
        <begin position="38"/>
        <end position="102"/>
    </location>
</feature>
<feature type="cross-link" description="6-(S-cysteinyl)-8alpha-(pros-histidyl)-FAD (His-Cys)" evidence="1">
    <location>
        <begin position="117"/>
        <end position="181"/>
    </location>
</feature>
<proteinExistence type="evidence at transcript level"/>
<gene>
    <name evidence="7" type="ordered locus">At5g44400</name>
    <name evidence="8" type="ORF">K9L2.20</name>
</gene>
<accession>Q9FKU8</accession>